<sequence>MVLHLVPRWSASLFRASPRWKKTYSQRASAQLKWLGCPRSVYSPLACRAYSKVSGSPEVMLTPERYPVQRLPFSTVSEEDLAAFECIIPGRVITDPEQLQTCNVDWLRTVRGCSKVLLRPQTSEEVSQILRHCYKRNLAVNPQGGNTGMVGGSVPVFDEVILSTALMNQVISFHDVSGILVCQAGCVLEELSRYVQERDFIMPLDLGAKGSCHIGGNVATNAGGLRFLRYGSLRGTVLGLEVVLADGTILNCLTSLRKDNTGYDLKQMFIGSEGTLGVITAVSIVCPPRPKAVNVAFLGCPGFTEVLQTFRTCKGQLGEILSAFEFMDAECMQLVGQHLHLTNPVQESPFYVLVETSGSSAGHDAEKLTNVLEQVLNSGLVIDGTMATDQRKVQMLWALRERITEALSRDGYVFKYDLSLPVERLYDLVIDLRTRLGPRAKHVVGYGHLGDGNLHLNVTAEAFSQELLGALEPYVYAWTAEQRGSVSAEHGLGFKKKNVLGYSKPPVAVKLMQQLKAMLDPKGILNPYKTLPARA</sequence>
<proteinExistence type="evidence at protein level"/>
<dbReference type="EC" id="1.1.99.39" evidence="6"/>
<dbReference type="EMBL" id="AABR03068074">
    <property type="status" value="NOT_ANNOTATED_CDS"/>
    <property type="molecule type" value="Genomic_DNA"/>
</dbReference>
<dbReference type="EMBL" id="AABR03072218">
    <property type="status" value="NOT_ANNOTATED_CDS"/>
    <property type="molecule type" value="Genomic_DNA"/>
</dbReference>
<dbReference type="EMBL" id="AABR03072243">
    <property type="status" value="NOT_ANNOTATED_CDS"/>
    <property type="molecule type" value="Genomic_DNA"/>
</dbReference>
<dbReference type="RefSeq" id="NP_001100396.2">
    <property type="nucleotide sequence ID" value="NM_001106926.2"/>
</dbReference>
<dbReference type="RefSeq" id="XP_006245583.1">
    <property type="nucleotide sequence ID" value="XM_006245521.5"/>
</dbReference>
<dbReference type="RefSeq" id="XP_006245584.1">
    <property type="nucleotide sequence ID" value="XM_006245522.5"/>
</dbReference>
<dbReference type="SMR" id="P84850"/>
<dbReference type="FunCoup" id="P84850">
    <property type="interactions" value="1178"/>
</dbReference>
<dbReference type="STRING" id="10116.ENSRNOP00000071036"/>
<dbReference type="iPTMnet" id="P84850"/>
<dbReference type="PhosphoSitePlus" id="P84850"/>
<dbReference type="PaxDb" id="10116-ENSRNOP00000025711"/>
<dbReference type="GeneID" id="301624"/>
<dbReference type="UCSC" id="RGD:1307976">
    <property type="organism name" value="rat"/>
</dbReference>
<dbReference type="AGR" id="RGD:1307976"/>
<dbReference type="CTD" id="728294"/>
<dbReference type="RGD" id="1307976">
    <property type="gene designation" value="D2hgdh"/>
</dbReference>
<dbReference type="VEuPathDB" id="HostDB:ENSRNOG00000019012"/>
<dbReference type="eggNOG" id="KOG1232">
    <property type="taxonomic scope" value="Eukaryota"/>
</dbReference>
<dbReference type="HOGENOM" id="CLU_017779_4_1_1"/>
<dbReference type="InParanoid" id="P84850"/>
<dbReference type="OrthoDB" id="5332616at2759"/>
<dbReference type="PhylomeDB" id="P84850"/>
<dbReference type="TreeFam" id="TF323342"/>
<dbReference type="Reactome" id="R-RNO-880009">
    <property type="pathway name" value="Interconversion of 2-oxoglutarate and 2-hydroxyglutarate"/>
</dbReference>
<dbReference type="PRO" id="PR:P84850"/>
<dbReference type="Proteomes" id="UP000002494">
    <property type="component" value="Chromosome 9"/>
</dbReference>
<dbReference type="Bgee" id="ENSRNOG00000019012">
    <property type="expression patterns" value="Expressed in liver and 18 other cell types or tissues"/>
</dbReference>
<dbReference type="ExpressionAtlas" id="P84850">
    <property type="expression patterns" value="baseline and differential"/>
</dbReference>
<dbReference type="GO" id="GO:0005739">
    <property type="term" value="C:mitochondrion"/>
    <property type="evidence" value="ECO:0000314"/>
    <property type="project" value="HGNC-UCL"/>
</dbReference>
<dbReference type="GO" id="GO:0051990">
    <property type="term" value="F:(R)-2-hydroxyglutarate dehydrogenase activity"/>
    <property type="evidence" value="ECO:0000314"/>
    <property type="project" value="HGNC-UCL"/>
</dbReference>
<dbReference type="GO" id="GO:0071949">
    <property type="term" value="F:FAD binding"/>
    <property type="evidence" value="ECO:0007669"/>
    <property type="project" value="InterPro"/>
</dbReference>
<dbReference type="GO" id="GO:0008270">
    <property type="term" value="F:zinc ion binding"/>
    <property type="evidence" value="ECO:0000250"/>
    <property type="project" value="UniProtKB"/>
</dbReference>
<dbReference type="GO" id="GO:0006089">
    <property type="term" value="P:lactate metabolic process"/>
    <property type="evidence" value="ECO:0000314"/>
    <property type="project" value="HGNC-UCL"/>
</dbReference>
<dbReference type="GO" id="GO:0006108">
    <property type="term" value="P:malate metabolic process"/>
    <property type="evidence" value="ECO:0000314"/>
    <property type="project" value="HGNC-UCL"/>
</dbReference>
<dbReference type="GO" id="GO:0032025">
    <property type="term" value="P:response to cobalt ion"/>
    <property type="evidence" value="ECO:0000314"/>
    <property type="project" value="HGNC-UCL"/>
</dbReference>
<dbReference type="GO" id="GO:0010042">
    <property type="term" value="P:response to manganese ion"/>
    <property type="evidence" value="ECO:0000314"/>
    <property type="project" value="HGNC-UCL"/>
</dbReference>
<dbReference type="GO" id="GO:0010043">
    <property type="term" value="P:response to zinc ion"/>
    <property type="evidence" value="ECO:0000314"/>
    <property type="project" value="HGNC-UCL"/>
</dbReference>
<dbReference type="GO" id="GO:1901275">
    <property type="term" value="P:tartrate metabolic process"/>
    <property type="evidence" value="ECO:0000314"/>
    <property type="project" value="HGNC-UCL"/>
</dbReference>
<dbReference type="FunFam" id="3.30.70.2190:FF:000001">
    <property type="entry name" value="D-2-hydroxyglutarate dehydrogenase mitochondrial"/>
    <property type="match status" value="1"/>
</dbReference>
<dbReference type="FunFam" id="3.30.70.2740:FF:000002">
    <property type="entry name" value="D-2-hydroxyglutarate dehydrogenase mitochondrial"/>
    <property type="match status" value="1"/>
</dbReference>
<dbReference type="FunFam" id="3.30.43.10:FF:000002">
    <property type="entry name" value="D-2-hydroxyglutarate dehydrogenase, mitochondrial"/>
    <property type="match status" value="1"/>
</dbReference>
<dbReference type="FunFam" id="3.30.465.10:FF:000053">
    <property type="entry name" value="D-lactate dehydrogenase (Cytochrome), putative"/>
    <property type="match status" value="1"/>
</dbReference>
<dbReference type="FunFam" id="1.10.45.10:FF:000001">
    <property type="entry name" value="D-lactate dehydrogenase mitochondrial"/>
    <property type="match status" value="1"/>
</dbReference>
<dbReference type="Gene3D" id="3.30.465.10">
    <property type="match status" value="1"/>
</dbReference>
<dbReference type="Gene3D" id="3.30.70.2190">
    <property type="match status" value="1"/>
</dbReference>
<dbReference type="Gene3D" id="3.30.70.2740">
    <property type="match status" value="1"/>
</dbReference>
<dbReference type="Gene3D" id="3.30.43.10">
    <property type="entry name" value="Uridine Diphospho-n-acetylenolpyruvylglucosamine Reductase, domain 2"/>
    <property type="match status" value="1"/>
</dbReference>
<dbReference type="Gene3D" id="1.10.45.10">
    <property type="entry name" value="Vanillyl-alcohol Oxidase, Chain A, domain 4"/>
    <property type="match status" value="1"/>
</dbReference>
<dbReference type="InterPro" id="IPR004113">
    <property type="entry name" value="FAD-bd_oxidored_4_C"/>
</dbReference>
<dbReference type="InterPro" id="IPR016166">
    <property type="entry name" value="FAD-bd_PCMH"/>
</dbReference>
<dbReference type="InterPro" id="IPR036318">
    <property type="entry name" value="FAD-bd_PCMH-like_sf"/>
</dbReference>
<dbReference type="InterPro" id="IPR016167">
    <property type="entry name" value="FAD-bd_PCMH_sub1"/>
</dbReference>
<dbReference type="InterPro" id="IPR016169">
    <property type="entry name" value="FAD-bd_PCMH_sub2"/>
</dbReference>
<dbReference type="InterPro" id="IPR016164">
    <property type="entry name" value="FAD-linked_Oxase-like_C"/>
</dbReference>
<dbReference type="InterPro" id="IPR051264">
    <property type="entry name" value="FAD-oxidored/transferase_4"/>
</dbReference>
<dbReference type="InterPro" id="IPR006094">
    <property type="entry name" value="Oxid_FAD_bind_N"/>
</dbReference>
<dbReference type="InterPro" id="IPR016171">
    <property type="entry name" value="Vanillyl_alc_oxidase_C-sub2"/>
</dbReference>
<dbReference type="PANTHER" id="PTHR43716">
    <property type="entry name" value="D-2-HYDROXYGLUTARATE DEHYDROGENASE, MITOCHONDRIAL"/>
    <property type="match status" value="1"/>
</dbReference>
<dbReference type="PANTHER" id="PTHR43716:SF1">
    <property type="entry name" value="D-2-HYDROXYGLUTARATE DEHYDROGENASE, MITOCHONDRIAL"/>
    <property type="match status" value="1"/>
</dbReference>
<dbReference type="Pfam" id="PF02913">
    <property type="entry name" value="FAD-oxidase_C"/>
    <property type="match status" value="1"/>
</dbReference>
<dbReference type="Pfam" id="PF01565">
    <property type="entry name" value="FAD_binding_4"/>
    <property type="match status" value="1"/>
</dbReference>
<dbReference type="SUPFAM" id="SSF56176">
    <property type="entry name" value="FAD-binding/transporter-associated domain-like"/>
    <property type="match status" value="1"/>
</dbReference>
<dbReference type="SUPFAM" id="SSF55103">
    <property type="entry name" value="FAD-linked oxidases, C-terminal domain"/>
    <property type="match status" value="1"/>
</dbReference>
<dbReference type="PROSITE" id="PS51387">
    <property type="entry name" value="FAD_PCMH"/>
    <property type="match status" value="1"/>
</dbReference>
<name>D2HDH_RAT</name>
<feature type="transit peptide" description="Mitochondrion" evidence="3">
    <location>
        <begin position="1"/>
        <end position="50"/>
    </location>
</feature>
<feature type="chain" id="PRO_0000234528" description="D-2-hydroxyglutarate dehydrogenase, mitochondrial">
    <location>
        <begin position="51"/>
        <end position="535"/>
    </location>
</feature>
<feature type="domain" description="FAD-binding PCMH-type" evidence="4">
    <location>
        <begin position="110"/>
        <end position="289"/>
    </location>
</feature>
<feature type="binding site" evidence="2">
    <location>
        <position position="400"/>
    </location>
    <ligand>
        <name>(R)-2-hydroxyglutarate</name>
        <dbReference type="ChEBI" id="CHEBI:15801"/>
    </ligand>
</feature>
<feature type="binding site" evidence="2">
    <location>
        <position position="400"/>
    </location>
    <ligand>
        <name>(R)-lactate</name>
        <dbReference type="ChEBI" id="CHEBI:16004"/>
    </ligand>
</feature>
<feature type="binding site" evidence="2">
    <location>
        <position position="400"/>
    </location>
    <ligand>
        <name>(R)-malate</name>
        <dbReference type="ChEBI" id="CHEBI:15588"/>
    </ligand>
</feature>
<feature type="binding site" evidence="2">
    <location>
        <position position="404"/>
    </location>
    <ligand>
        <name>(R)-2-hydroxyglutarate</name>
        <dbReference type="ChEBI" id="CHEBI:15801"/>
    </ligand>
</feature>
<feature type="binding site" evidence="2">
    <location>
        <position position="404"/>
    </location>
    <ligand>
        <name>(R)-malate</name>
        <dbReference type="ChEBI" id="CHEBI:15588"/>
    </ligand>
</feature>
<feature type="binding site" evidence="2">
    <location>
        <position position="415"/>
    </location>
    <ligand>
        <name>(R)-2-hydroxyglutarate</name>
        <dbReference type="ChEBI" id="CHEBI:15801"/>
    </ligand>
</feature>
<feature type="binding site" evidence="2">
    <location>
        <position position="415"/>
    </location>
    <ligand>
        <name>(R)-malate</name>
        <dbReference type="ChEBI" id="CHEBI:15588"/>
    </ligand>
</feature>
<feature type="binding site" evidence="2">
    <location>
        <position position="448"/>
    </location>
    <ligand>
        <name>Zn(2+)</name>
        <dbReference type="ChEBI" id="CHEBI:29105"/>
    </ligand>
</feature>
<feature type="binding site" evidence="2">
    <location>
        <position position="455"/>
    </location>
    <ligand>
        <name>Zn(2+)</name>
        <dbReference type="ChEBI" id="CHEBI:29105"/>
    </ligand>
</feature>
<feature type="binding site" evidence="2">
    <location>
        <position position="457"/>
    </location>
    <ligand>
        <name>(R)-2-hydroxyglutarate</name>
        <dbReference type="ChEBI" id="CHEBI:15801"/>
    </ligand>
</feature>
<feature type="binding site" evidence="2">
    <location>
        <position position="489"/>
    </location>
    <ligand>
        <name>Zn(2+)</name>
        <dbReference type="ChEBI" id="CHEBI:29105"/>
    </ligand>
</feature>
<feature type="binding site" evidence="2">
    <location>
        <position position="490"/>
    </location>
    <ligand>
        <name>(R)-2-hydroxyglutarate</name>
        <dbReference type="ChEBI" id="CHEBI:15801"/>
    </ligand>
</feature>
<feature type="binding site" evidence="2">
    <location>
        <position position="490"/>
    </location>
    <ligand>
        <name>(R)-lactate</name>
        <dbReference type="ChEBI" id="CHEBI:16004"/>
    </ligand>
</feature>
<feature type="binding site" evidence="2">
    <location>
        <position position="490"/>
    </location>
    <ligand>
        <name>(R)-malate</name>
        <dbReference type="ChEBI" id="CHEBI:15588"/>
    </ligand>
</feature>
<feature type="modified residue" description="N6-succinyllysine" evidence="1">
    <location>
        <position position="115"/>
    </location>
</feature>
<gene>
    <name evidence="2" type="primary">D2hgdh</name>
</gene>
<comment type="function">
    <text evidence="2 6">Catalyzes the oxidation of D-2-hydroxyglutarate (D-2-HG) to alpha-ketoglutarate (PubMed:15070399). Also catalyzes the oxidation of other D-2-hydroxyacids, such as D-malate (D-MAL) and D-lactate (D-LAC) (PubMed:15070399). Exhibits high activities towards D-2-HG and D-MAL but a very weak activity towards D-LAC (By similarity).</text>
</comment>
<comment type="catalytic activity">
    <reaction evidence="6">
        <text>(R)-2-hydroxyglutarate + A = 2-oxoglutarate + AH2</text>
        <dbReference type="Rhea" id="RHEA:38295"/>
        <dbReference type="ChEBI" id="CHEBI:13193"/>
        <dbReference type="ChEBI" id="CHEBI:15801"/>
        <dbReference type="ChEBI" id="CHEBI:16810"/>
        <dbReference type="ChEBI" id="CHEBI:17499"/>
        <dbReference type="EC" id="1.1.99.39"/>
    </reaction>
</comment>
<comment type="catalytic activity">
    <reaction evidence="2">
        <text>(R)-malate + A = oxaloacetate + AH2</text>
        <dbReference type="Rhea" id="RHEA:67460"/>
        <dbReference type="ChEBI" id="CHEBI:13193"/>
        <dbReference type="ChEBI" id="CHEBI:15588"/>
        <dbReference type="ChEBI" id="CHEBI:16452"/>
        <dbReference type="ChEBI" id="CHEBI:17499"/>
    </reaction>
    <physiologicalReaction direction="left-to-right" evidence="2">
        <dbReference type="Rhea" id="RHEA:67461"/>
    </physiologicalReaction>
</comment>
<comment type="cofactor">
    <cofactor evidence="7">
        <name>FAD</name>
        <dbReference type="ChEBI" id="CHEBI:57692"/>
    </cofactor>
</comment>
<comment type="activity regulation">
    <text evidence="6">Activated by zinc, cobalt and manganese ions (PubMed:15070399). Inhibited by EDTA (PubMed:15070399).</text>
</comment>
<comment type="subcellular location">
    <subcellularLocation>
        <location evidence="6">Mitochondrion</location>
    </subcellularLocation>
</comment>
<comment type="similarity">
    <text evidence="3">Belongs to the FAD-binding oxidoreductase/transferase type 4 family.</text>
</comment>
<keyword id="KW-0274">FAD</keyword>
<keyword id="KW-0285">Flavoprotein</keyword>
<keyword id="KW-0479">Metal-binding</keyword>
<keyword id="KW-0496">Mitochondrion</keyword>
<keyword id="KW-0560">Oxidoreductase</keyword>
<keyword id="KW-1185">Reference proteome</keyword>
<keyword id="KW-0809">Transit peptide</keyword>
<keyword id="KW-0862">Zinc</keyword>
<reference evidence="7" key="1">
    <citation type="journal article" date="2004" name="Nature">
        <title>Genome sequence of the Brown Norway rat yields insights into mammalian evolution.</title>
        <authorList>
            <person name="Gibbs R.A."/>
            <person name="Weinstock G.M."/>
            <person name="Metzker M.L."/>
            <person name="Muzny D.M."/>
            <person name="Sodergren E.J."/>
            <person name="Scherer S."/>
            <person name="Scott G."/>
            <person name="Steffen D."/>
            <person name="Worley K.C."/>
            <person name="Burch P.E."/>
            <person name="Okwuonu G."/>
            <person name="Hines S."/>
            <person name="Lewis L."/>
            <person name="Deramo C."/>
            <person name="Delgado O."/>
            <person name="Dugan-Rocha S."/>
            <person name="Miner G."/>
            <person name="Morgan M."/>
            <person name="Hawes A."/>
            <person name="Gill R."/>
            <person name="Holt R.A."/>
            <person name="Adams M.D."/>
            <person name="Amanatides P.G."/>
            <person name="Baden-Tillson H."/>
            <person name="Barnstead M."/>
            <person name="Chin S."/>
            <person name="Evans C.A."/>
            <person name="Ferriera S."/>
            <person name="Fosler C."/>
            <person name="Glodek A."/>
            <person name="Gu Z."/>
            <person name="Jennings D."/>
            <person name="Kraft C.L."/>
            <person name="Nguyen T."/>
            <person name="Pfannkoch C.M."/>
            <person name="Sitter C."/>
            <person name="Sutton G.G."/>
            <person name="Venter J.C."/>
            <person name="Woodage T."/>
            <person name="Smith D."/>
            <person name="Lee H.-M."/>
            <person name="Gustafson E."/>
            <person name="Cahill P."/>
            <person name="Kana A."/>
            <person name="Doucette-Stamm L."/>
            <person name="Weinstock K."/>
            <person name="Fechtel K."/>
            <person name="Weiss R.B."/>
            <person name="Dunn D.M."/>
            <person name="Green E.D."/>
            <person name="Blakesley R.W."/>
            <person name="Bouffard G.G."/>
            <person name="De Jong P.J."/>
            <person name="Osoegawa K."/>
            <person name="Zhu B."/>
            <person name="Marra M."/>
            <person name="Schein J."/>
            <person name="Bosdet I."/>
            <person name="Fjell C."/>
            <person name="Jones S."/>
            <person name="Krzywinski M."/>
            <person name="Mathewson C."/>
            <person name="Siddiqui A."/>
            <person name="Wye N."/>
            <person name="McPherson J."/>
            <person name="Zhao S."/>
            <person name="Fraser C.M."/>
            <person name="Shetty J."/>
            <person name="Shatsman S."/>
            <person name="Geer K."/>
            <person name="Chen Y."/>
            <person name="Abramzon S."/>
            <person name="Nierman W.C."/>
            <person name="Havlak P.H."/>
            <person name="Chen R."/>
            <person name="Durbin K.J."/>
            <person name="Egan A."/>
            <person name="Ren Y."/>
            <person name="Song X.-Z."/>
            <person name="Li B."/>
            <person name="Liu Y."/>
            <person name="Qin X."/>
            <person name="Cawley S."/>
            <person name="Cooney A.J."/>
            <person name="D'Souza L.M."/>
            <person name="Martin K."/>
            <person name="Wu J.Q."/>
            <person name="Gonzalez-Garay M.L."/>
            <person name="Jackson A.R."/>
            <person name="Kalafus K.J."/>
            <person name="McLeod M.P."/>
            <person name="Milosavljevic A."/>
            <person name="Virk D."/>
            <person name="Volkov A."/>
            <person name="Wheeler D.A."/>
            <person name="Zhang Z."/>
            <person name="Bailey J.A."/>
            <person name="Eichler E.E."/>
            <person name="Tuzun E."/>
            <person name="Birney E."/>
            <person name="Mongin E."/>
            <person name="Ureta-Vidal A."/>
            <person name="Woodwark C."/>
            <person name="Zdobnov E."/>
            <person name="Bork P."/>
            <person name="Suyama M."/>
            <person name="Torrents D."/>
            <person name="Alexandersson M."/>
            <person name="Trask B.J."/>
            <person name="Young J.M."/>
            <person name="Huang H."/>
            <person name="Wang H."/>
            <person name="Xing H."/>
            <person name="Daniels S."/>
            <person name="Gietzen D."/>
            <person name="Schmidt J."/>
            <person name="Stevens K."/>
            <person name="Vitt U."/>
            <person name="Wingrove J."/>
            <person name="Camara F."/>
            <person name="Mar Alba M."/>
            <person name="Abril J.F."/>
            <person name="Guigo R."/>
            <person name="Smit A."/>
            <person name="Dubchak I."/>
            <person name="Rubin E.M."/>
            <person name="Couronne O."/>
            <person name="Poliakov A."/>
            <person name="Huebner N."/>
            <person name="Ganten D."/>
            <person name="Goesele C."/>
            <person name="Hummel O."/>
            <person name="Kreitler T."/>
            <person name="Lee Y.-A."/>
            <person name="Monti J."/>
            <person name="Schulz H."/>
            <person name="Zimdahl H."/>
            <person name="Himmelbauer H."/>
            <person name="Lehrach H."/>
            <person name="Jacob H.J."/>
            <person name="Bromberg S."/>
            <person name="Gullings-Handley J."/>
            <person name="Jensen-Seaman M.I."/>
            <person name="Kwitek A.E."/>
            <person name="Lazar J."/>
            <person name="Pasko D."/>
            <person name="Tonellato P.J."/>
            <person name="Twigger S."/>
            <person name="Ponting C.P."/>
            <person name="Duarte J.M."/>
            <person name="Rice S."/>
            <person name="Goodstadt L."/>
            <person name="Beatson S.A."/>
            <person name="Emes R.D."/>
            <person name="Winter E.E."/>
            <person name="Webber C."/>
            <person name="Brandt P."/>
            <person name="Nyakatura G."/>
            <person name="Adetobi M."/>
            <person name="Chiaromonte F."/>
            <person name="Elnitski L."/>
            <person name="Eswara P."/>
            <person name="Hardison R.C."/>
            <person name="Hou M."/>
            <person name="Kolbe D."/>
            <person name="Makova K."/>
            <person name="Miller W."/>
            <person name="Nekrutenko A."/>
            <person name="Riemer C."/>
            <person name="Schwartz S."/>
            <person name="Taylor J."/>
            <person name="Yang S."/>
            <person name="Zhang Y."/>
            <person name="Lindpaintner K."/>
            <person name="Andrews T.D."/>
            <person name="Caccamo M."/>
            <person name="Clamp M."/>
            <person name="Clarke L."/>
            <person name="Curwen V."/>
            <person name="Durbin R.M."/>
            <person name="Eyras E."/>
            <person name="Searle S.M."/>
            <person name="Cooper G.M."/>
            <person name="Batzoglou S."/>
            <person name="Brudno M."/>
            <person name="Sidow A."/>
            <person name="Stone E.A."/>
            <person name="Payseur B.A."/>
            <person name="Bourque G."/>
            <person name="Lopez-Otin C."/>
            <person name="Puente X.S."/>
            <person name="Chakrabarti K."/>
            <person name="Chatterji S."/>
            <person name="Dewey C."/>
            <person name="Pachter L."/>
            <person name="Bray N."/>
            <person name="Yap V.B."/>
            <person name="Caspi A."/>
            <person name="Tesler G."/>
            <person name="Pevzner P.A."/>
            <person name="Haussler D."/>
            <person name="Roskin K.M."/>
            <person name="Baertsch R."/>
            <person name="Clawson H."/>
            <person name="Furey T.S."/>
            <person name="Hinrichs A.S."/>
            <person name="Karolchik D."/>
            <person name="Kent W.J."/>
            <person name="Rosenbloom K.R."/>
            <person name="Trumbower H."/>
            <person name="Weirauch M."/>
            <person name="Cooper D.N."/>
            <person name="Stenson P.D."/>
            <person name="Ma B."/>
            <person name="Brent M."/>
            <person name="Arumugam M."/>
            <person name="Shteynberg D."/>
            <person name="Copley R.R."/>
            <person name="Taylor M.S."/>
            <person name="Riethman H."/>
            <person name="Mudunuri U."/>
            <person name="Peterson J."/>
            <person name="Guyer M."/>
            <person name="Felsenfeld A."/>
            <person name="Old S."/>
            <person name="Mockrin S."/>
            <person name="Collins F.S."/>
        </authorList>
    </citation>
    <scope>NUCLEOTIDE SEQUENCE [LARGE SCALE GENOMIC DNA]</scope>
    <source>
        <strain evidence="5">Brown Norway</strain>
    </source>
</reference>
<reference key="2">
    <citation type="journal article" date="2004" name="Biochem. J.">
        <title>Identification of a dehydrogenase acting on D-2-hydroxyglutarate.</title>
        <authorList>
            <person name="Achouri Y."/>
            <person name="Noel G."/>
            <person name="Vertommen D."/>
            <person name="Rider M.H."/>
            <person name="Veiga-Da-Cunha M."/>
            <person name="van Schaftingen E."/>
        </authorList>
    </citation>
    <scope>FUNCTION</scope>
    <scope>CATALYTIC ACTIVITY</scope>
    <scope>ACTIVITY REGULATION</scope>
    <scope>SUBCELLULAR LOCATION</scope>
</reference>
<protein>
    <recommendedName>
        <fullName>D-2-hydroxyglutarate dehydrogenase, mitochondrial</fullName>
        <ecNumber evidence="6">1.1.99.39</ecNumber>
    </recommendedName>
</protein>
<organism>
    <name type="scientific">Rattus norvegicus</name>
    <name type="common">Rat</name>
    <dbReference type="NCBI Taxonomy" id="10116"/>
    <lineage>
        <taxon>Eukaryota</taxon>
        <taxon>Metazoa</taxon>
        <taxon>Chordata</taxon>
        <taxon>Craniata</taxon>
        <taxon>Vertebrata</taxon>
        <taxon>Euteleostomi</taxon>
        <taxon>Mammalia</taxon>
        <taxon>Eutheria</taxon>
        <taxon>Euarchontoglires</taxon>
        <taxon>Glires</taxon>
        <taxon>Rodentia</taxon>
        <taxon>Myomorpha</taxon>
        <taxon>Muroidea</taxon>
        <taxon>Muridae</taxon>
        <taxon>Murinae</taxon>
        <taxon>Rattus</taxon>
    </lineage>
</organism>
<evidence type="ECO:0000250" key="1">
    <source>
        <dbReference type="UniProtKB" id="Q8CIM3"/>
    </source>
</evidence>
<evidence type="ECO:0000250" key="2">
    <source>
        <dbReference type="UniProtKB" id="Q8N465"/>
    </source>
</evidence>
<evidence type="ECO:0000255" key="3"/>
<evidence type="ECO:0000255" key="4">
    <source>
        <dbReference type="PROSITE-ProRule" id="PRU00718"/>
    </source>
</evidence>
<evidence type="ECO:0000269" key="5">
    <source>
    </source>
</evidence>
<evidence type="ECO:0000269" key="6">
    <source>
    </source>
</evidence>
<evidence type="ECO:0000305" key="7"/>
<accession>P84850</accession>